<gene>
    <name evidence="1" type="primary">metAA</name>
    <name type="ordered locus">Cthe_1845</name>
</gene>
<sequence>MPIKIPDSLPAKEVLTNENIFVMDEHRALHQDVRPLRIAILNLMPTKITTETQLLRLIGNTPIQVEIELLHPKTHVSKNTPEEHLTKFYKTFDEVKDEKFDGLIITGAPVEQMEFEEVNYWEELKKIMDWSVHNVYSTFHICWGAQAALYHHYGIKKYPLKEKMFGIFPHRICKPNTMLLRGFDDCFYAPHSRHTEVRREDIEKVGEIDILSDSEEAGVYIMKTRGGRQVFVTGHSEYDQFTLKEEYERDLAKGLKIKMPKNYFPDDDPTKPPVVNWRGHANLLFSNWLNYYVYQETPFDLNELK</sequence>
<reference key="1">
    <citation type="submission" date="2007-02" db="EMBL/GenBank/DDBJ databases">
        <title>Complete sequence of Clostridium thermocellum ATCC 27405.</title>
        <authorList>
            <consortium name="US DOE Joint Genome Institute"/>
            <person name="Copeland A."/>
            <person name="Lucas S."/>
            <person name="Lapidus A."/>
            <person name="Barry K."/>
            <person name="Detter J.C."/>
            <person name="Glavina del Rio T."/>
            <person name="Hammon N."/>
            <person name="Israni S."/>
            <person name="Dalin E."/>
            <person name="Tice H."/>
            <person name="Pitluck S."/>
            <person name="Chertkov O."/>
            <person name="Brettin T."/>
            <person name="Bruce D."/>
            <person name="Han C."/>
            <person name="Tapia R."/>
            <person name="Gilna P."/>
            <person name="Schmutz J."/>
            <person name="Larimer F."/>
            <person name="Land M."/>
            <person name="Hauser L."/>
            <person name="Kyrpides N."/>
            <person name="Mikhailova N."/>
            <person name="Wu J.H.D."/>
            <person name="Newcomb M."/>
            <person name="Richardson P."/>
        </authorList>
    </citation>
    <scope>NUCLEOTIDE SEQUENCE [LARGE SCALE GENOMIC DNA]</scope>
    <source>
        <strain>ATCC 27405 / DSM 1237 / JCM 9322 / NBRC 103400 / NCIMB 10682 / NRRL B-4536 / VPI 7372</strain>
    </source>
</reference>
<comment type="function">
    <text evidence="1">Transfers an acetyl group from acetyl-CoA to L-homoserine, forming acetyl-L-homoserine.</text>
</comment>
<comment type="catalytic activity">
    <reaction evidence="1">
        <text>L-homoserine + acetyl-CoA = O-acetyl-L-homoserine + CoA</text>
        <dbReference type="Rhea" id="RHEA:13701"/>
        <dbReference type="ChEBI" id="CHEBI:57287"/>
        <dbReference type="ChEBI" id="CHEBI:57288"/>
        <dbReference type="ChEBI" id="CHEBI:57476"/>
        <dbReference type="ChEBI" id="CHEBI:57716"/>
        <dbReference type="EC" id="2.3.1.31"/>
    </reaction>
</comment>
<comment type="pathway">
    <text evidence="1">Amino-acid biosynthesis; L-methionine biosynthesis via de novo pathway; O-acetyl-L-homoserine from L-homoserine: step 1/1.</text>
</comment>
<comment type="subcellular location">
    <subcellularLocation>
        <location evidence="1">Cytoplasm</location>
    </subcellularLocation>
</comment>
<comment type="similarity">
    <text evidence="1">Belongs to the MetA family.</text>
</comment>
<protein>
    <recommendedName>
        <fullName evidence="1">Homoserine O-acetyltransferase</fullName>
        <shortName evidence="1">HAT</shortName>
        <ecNumber evidence="1">2.3.1.31</ecNumber>
    </recommendedName>
    <alternativeName>
        <fullName evidence="1">Homoserine transacetylase</fullName>
        <shortName evidence="1">HTA</shortName>
    </alternativeName>
</protein>
<evidence type="ECO:0000255" key="1">
    <source>
        <dbReference type="HAMAP-Rule" id="MF_00295"/>
    </source>
</evidence>
<dbReference type="EC" id="2.3.1.31" evidence="1"/>
<dbReference type="EMBL" id="CP000568">
    <property type="protein sequence ID" value="ABN53066.1"/>
    <property type="molecule type" value="Genomic_DNA"/>
</dbReference>
<dbReference type="SMR" id="A3DGI7"/>
<dbReference type="STRING" id="203119.Cthe_1845"/>
<dbReference type="GeneID" id="35804933"/>
<dbReference type="KEGG" id="cth:Cthe_1845"/>
<dbReference type="eggNOG" id="COG1897">
    <property type="taxonomic scope" value="Bacteria"/>
</dbReference>
<dbReference type="HOGENOM" id="CLU_057851_0_1_9"/>
<dbReference type="OrthoDB" id="9772423at2"/>
<dbReference type="UniPathway" id="UPA00051">
    <property type="reaction ID" value="UER00074"/>
</dbReference>
<dbReference type="Proteomes" id="UP000002145">
    <property type="component" value="Chromosome"/>
</dbReference>
<dbReference type="GO" id="GO:0005737">
    <property type="term" value="C:cytoplasm"/>
    <property type="evidence" value="ECO:0007669"/>
    <property type="project" value="UniProtKB-SubCell"/>
</dbReference>
<dbReference type="GO" id="GO:0004414">
    <property type="term" value="F:homoserine O-acetyltransferase activity"/>
    <property type="evidence" value="ECO:0007669"/>
    <property type="project" value="UniProtKB-EC"/>
</dbReference>
<dbReference type="GO" id="GO:0008899">
    <property type="term" value="F:homoserine O-succinyltransferase activity"/>
    <property type="evidence" value="ECO:0007669"/>
    <property type="project" value="UniProtKB-UniRule"/>
</dbReference>
<dbReference type="GO" id="GO:0019281">
    <property type="term" value="P:L-methionine biosynthetic process from homoserine via O-succinyl-L-homoserine and cystathionine"/>
    <property type="evidence" value="ECO:0007669"/>
    <property type="project" value="InterPro"/>
</dbReference>
<dbReference type="CDD" id="cd03131">
    <property type="entry name" value="GATase1_HTS"/>
    <property type="match status" value="1"/>
</dbReference>
<dbReference type="FunFam" id="3.40.50.880:FF:000004">
    <property type="entry name" value="Homoserine O-succinyltransferase"/>
    <property type="match status" value="1"/>
</dbReference>
<dbReference type="Gene3D" id="3.40.50.880">
    <property type="match status" value="1"/>
</dbReference>
<dbReference type="HAMAP" id="MF_00295">
    <property type="entry name" value="MetA_acyltransf"/>
    <property type="match status" value="1"/>
</dbReference>
<dbReference type="InterPro" id="IPR029062">
    <property type="entry name" value="Class_I_gatase-like"/>
</dbReference>
<dbReference type="InterPro" id="IPR005697">
    <property type="entry name" value="HST_MetA"/>
</dbReference>
<dbReference type="InterPro" id="IPR033752">
    <property type="entry name" value="MetA_family"/>
</dbReference>
<dbReference type="NCBIfam" id="TIGR01001">
    <property type="entry name" value="metA"/>
    <property type="match status" value="1"/>
</dbReference>
<dbReference type="PANTHER" id="PTHR20919">
    <property type="entry name" value="HOMOSERINE O-SUCCINYLTRANSFERASE"/>
    <property type="match status" value="1"/>
</dbReference>
<dbReference type="PANTHER" id="PTHR20919:SF0">
    <property type="entry name" value="HOMOSERINE O-SUCCINYLTRANSFERASE"/>
    <property type="match status" value="1"/>
</dbReference>
<dbReference type="Pfam" id="PF04204">
    <property type="entry name" value="HTS"/>
    <property type="match status" value="1"/>
</dbReference>
<dbReference type="PIRSF" id="PIRSF000450">
    <property type="entry name" value="H_ser_succinyltr"/>
    <property type="match status" value="1"/>
</dbReference>
<dbReference type="SUPFAM" id="SSF52317">
    <property type="entry name" value="Class I glutamine amidotransferase-like"/>
    <property type="match status" value="1"/>
</dbReference>
<name>METAA_ACET2</name>
<feature type="chain" id="PRO_1000021809" description="Homoserine O-acetyltransferase">
    <location>
        <begin position="1"/>
        <end position="305"/>
    </location>
</feature>
<feature type="active site" description="Acyl-thioester intermediate" evidence="1">
    <location>
        <position position="142"/>
    </location>
</feature>
<feature type="active site" description="Proton acceptor" evidence="1">
    <location>
        <position position="235"/>
    </location>
</feature>
<feature type="active site" evidence="1">
    <location>
        <position position="237"/>
    </location>
</feature>
<feature type="binding site" evidence="1">
    <location>
        <position position="163"/>
    </location>
    <ligand>
        <name>substrate</name>
    </ligand>
</feature>
<feature type="binding site" evidence="1">
    <location>
        <position position="192"/>
    </location>
    <ligand>
        <name>substrate</name>
    </ligand>
</feature>
<feature type="binding site" evidence="1">
    <location>
        <position position="249"/>
    </location>
    <ligand>
        <name>substrate</name>
    </ligand>
</feature>
<feature type="site" description="Important for acyl-CoA specificity" evidence="1">
    <location>
        <position position="111"/>
    </location>
</feature>
<feature type="site" description="Important for substrate specificity" evidence="1">
    <location>
        <position position="192"/>
    </location>
</feature>
<proteinExistence type="inferred from homology"/>
<organism>
    <name type="scientific">Acetivibrio thermocellus (strain ATCC 27405 / DSM 1237 / JCM 9322 / NBRC 103400 / NCIMB 10682 / NRRL B-4536 / VPI 7372)</name>
    <name type="common">Clostridium thermocellum</name>
    <dbReference type="NCBI Taxonomy" id="203119"/>
    <lineage>
        <taxon>Bacteria</taxon>
        <taxon>Bacillati</taxon>
        <taxon>Bacillota</taxon>
        <taxon>Clostridia</taxon>
        <taxon>Eubacteriales</taxon>
        <taxon>Oscillospiraceae</taxon>
        <taxon>Acetivibrio</taxon>
    </lineage>
</organism>
<keyword id="KW-0012">Acyltransferase</keyword>
<keyword id="KW-0028">Amino-acid biosynthesis</keyword>
<keyword id="KW-0963">Cytoplasm</keyword>
<keyword id="KW-0486">Methionine biosynthesis</keyword>
<keyword id="KW-1185">Reference proteome</keyword>
<keyword id="KW-0808">Transferase</keyword>
<accession>A3DGI7</accession>